<accession>B7NDS5</accession>
<dbReference type="EMBL" id="CU928163">
    <property type="protein sequence ID" value="CAR14925.1"/>
    <property type="molecule type" value="Genomic_DNA"/>
</dbReference>
<dbReference type="RefSeq" id="WP_000358960.1">
    <property type="nucleotide sequence ID" value="NC_011751.1"/>
</dbReference>
<dbReference type="RefSeq" id="YP_002414430.1">
    <property type="nucleotide sequence ID" value="NC_011751.1"/>
</dbReference>
<dbReference type="SMR" id="B7NDS5"/>
<dbReference type="STRING" id="585056.ECUMN_3777"/>
<dbReference type="GeneID" id="98390426"/>
<dbReference type="KEGG" id="eum:ECUMN_3777"/>
<dbReference type="PATRIC" id="fig|585056.7.peg.3952"/>
<dbReference type="HOGENOM" id="CLU_098841_0_1_6"/>
<dbReference type="Proteomes" id="UP000007097">
    <property type="component" value="Chromosome"/>
</dbReference>
<dbReference type="GO" id="GO:0022625">
    <property type="term" value="C:cytosolic large ribosomal subunit"/>
    <property type="evidence" value="ECO:0007669"/>
    <property type="project" value="TreeGrafter"/>
</dbReference>
<dbReference type="GO" id="GO:0008097">
    <property type="term" value="F:5S rRNA binding"/>
    <property type="evidence" value="ECO:0007669"/>
    <property type="project" value="TreeGrafter"/>
</dbReference>
<dbReference type="GO" id="GO:0003735">
    <property type="term" value="F:structural constituent of ribosome"/>
    <property type="evidence" value="ECO:0007669"/>
    <property type="project" value="InterPro"/>
</dbReference>
<dbReference type="GO" id="GO:0006412">
    <property type="term" value="P:translation"/>
    <property type="evidence" value="ECO:0007669"/>
    <property type="project" value="UniProtKB-UniRule"/>
</dbReference>
<dbReference type="CDD" id="cd00432">
    <property type="entry name" value="Ribosomal_L18_L5e"/>
    <property type="match status" value="1"/>
</dbReference>
<dbReference type="FunFam" id="3.30.420.100:FF:000001">
    <property type="entry name" value="50S ribosomal protein L18"/>
    <property type="match status" value="1"/>
</dbReference>
<dbReference type="Gene3D" id="3.30.420.100">
    <property type="match status" value="1"/>
</dbReference>
<dbReference type="HAMAP" id="MF_01337_B">
    <property type="entry name" value="Ribosomal_uL18_B"/>
    <property type="match status" value="1"/>
</dbReference>
<dbReference type="InterPro" id="IPR004389">
    <property type="entry name" value="Ribosomal_uL18_bac-type"/>
</dbReference>
<dbReference type="InterPro" id="IPR005484">
    <property type="entry name" value="Ribosomal_uL18_bac/euk"/>
</dbReference>
<dbReference type="NCBIfam" id="TIGR00060">
    <property type="entry name" value="L18_bact"/>
    <property type="match status" value="1"/>
</dbReference>
<dbReference type="PANTHER" id="PTHR12899">
    <property type="entry name" value="39S RIBOSOMAL PROTEIN L18, MITOCHONDRIAL"/>
    <property type="match status" value="1"/>
</dbReference>
<dbReference type="PANTHER" id="PTHR12899:SF3">
    <property type="entry name" value="LARGE RIBOSOMAL SUBUNIT PROTEIN UL18M"/>
    <property type="match status" value="1"/>
</dbReference>
<dbReference type="Pfam" id="PF00861">
    <property type="entry name" value="Ribosomal_L18p"/>
    <property type="match status" value="1"/>
</dbReference>
<dbReference type="SUPFAM" id="SSF53137">
    <property type="entry name" value="Translational machinery components"/>
    <property type="match status" value="1"/>
</dbReference>
<name>RL18_ECOLU</name>
<proteinExistence type="inferred from homology"/>
<feature type="chain" id="PRO_1000142661" description="Large ribosomal subunit protein uL18">
    <location>
        <begin position="1"/>
        <end position="117"/>
    </location>
</feature>
<evidence type="ECO:0000255" key="1">
    <source>
        <dbReference type="HAMAP-Rule" id="MF_01337"/>
    </source>
</evidence>
<evidence type="ECO:0000305" key="2"/>
<gene>
    <name evidence="1" type="primary">rplR</name>
    <name type="ordered locus">ECUMN_3777</name>
</gene>
<protein>
    <recommendedName>
        <fullName evidence="1">Large ribosomal subunit protein uL18</fullName>
    </recommendedName>
    <alternativeName>
        <fullName evidence="2">50S ribosomal protein L18</fullName>
    </alternativeName>
</protein>
<comment type="function">
    <text evidence="1">This is one of the proteins that bind and probably mediate the attachment of the 5S RNA into the large ribosomal subunit, where it forms part of the central protuberance.</text>
</comment>
<comment type="subunit">
    <text evidence="1">Part of the 50S ribosomal subunit; part of the 5S rRNA/L5/L18/L25 subcomplex. Contacts the 5S and 23S rRNAs.</text>
</comment>
<comment type="similarity">
    <text evidence="1">Belongs to the universal ribosomal protein uL18 family.</text>
</comment>
<keyword id="KW-0687">Ribonucleoprotein</keyword>
<keyword id="KW-0689">Ribosomal protein</keyword>
<keyword id="KW-0694">RNA-binding</keyword>
<keyword id="KW-0699">rRNA-binding</keyword>
<sequence length="117" mass="12770">MDKKSARIRRATRARRKLQELGATRLVVHRTPRHIYAQVIAPNGSEVLVAASTVEKAIAEQLKYTGNKDAAAAVGKAVAERALEKGIKDVSFDRSGFQYHGRVQALADAAREAGLQF</sequence>
<organism>
    <name type="scientific">Escherichia coli O17:K52:H18 (strain UMN026 / ExPEC)</name>
    <dbReference type="NCBI Taxonomy" id="585056"/>
    <lineage>
        <taxon>Bacteria</taxon>
        <taxon>Pseudomonadati</taxon>
        <taxon>Pseudomonadota</taxon>
        <taxon>Gammaproteobacteria</taxon>
        <taxon>Enterobacterales</taxon>
        <taxon>Enterobacteriaceae</taxon>
        <taxon>Escherichia</taxon>
    </lineage>
</organism>
<reference key="1">
    <citation type="journal article" date="2009" name="PLoS Genet.">
        <title>Organised genome dynamics in the Escherichia coli species results in highly diverse adaptive paths.</title>
        <authorList>
            <person name="Touchon M."/>
            <person name="Hoede C."/>
            <person name="Tenaillon O."/>
            <person name="Barbe V."/>
            <person name="Baeriswyl S."/>
            <person name="Bidet P."/>
            <person name="Bingen E."/>
            <person name="Bonacorsi S."/>
            <person name="Bouchier C."/>
            <person name="Bouvet O."/>
            <person name="Calteau A."/>
            <person name="Chiapello H."/>
            <person name="Clermont O."/>
            <person name="Cruveiller S."/>
            <person name="Danchin A."/>
            <person name="Diard M."/>
            <person name="Dossat C."/>
            <person name="Karoui M.E."/>
            <person name="Frapy E."/>
            <person name="Garry L."/>
            <person name="Ghigo J.M."/>
            <person name="Gilles A.M."/>
            <person name="Johnson J."/>
            <person name="Le Bouguenec C."/>
            <person name="Lescat M."/>
            <person name="Mangenot S."/>
            <person name="Martinez-Jehanne V."/>
            <person name="Matic I."/>
            <person name="Nassif X."/>
            <person name="Oztas S."/>
            <person name="Petit M.A."/>
            <person name="Pichon C."/>
            <person name="Rouy Z."/>
            <person name="Ruf C.S."/>
            <person name="Schneider D."/>
            <person name="Tourret J."/>
            <person name="Vacherie B."/>
            <person name="Vallenet D."/>
            <person name="Medigue C."/>
            <person name="Rocha E.P.C."/>
            <person name="Denamur E."/>
        </authorList>
    </citation>
    <scope>NUCLEOTIDE SEQUENCE [LARGE SCALE GENOMIC DNA]</scope>
    <source>
        <strain>UMN026 / ExPEC</strain>
    </source>
</reference>